<evidence type="ECO:0000255" key="1">
    <source>
        <dbReference type="HAMAP-Rule" id="MF_00344"/>
    </source>
</evidence>
<organism>
    <name type="scientific">Legionella pneumophila subsp. pneumophila (strain Philadelphia 1 / ATCC 33152 / DSM 7513)</name>
    <dbReference type="NCBI Taxonomy" id="272624"/>
    <lineage>
        <taxon>Bacteria</taxon>
        <taxon>Pseudomonadati</taxon>
        <taxon>Pseudomonadota</taxon>
        <taxon>Gammaproteobacteria</taxon>
        <taxon>Legionellales</taxon>
        <taxon>Legionellaceae</taxon>
        <taxon>Legionella</taxon>
    </lineage>
</organism>
<proteinExistence type="inferred from homology"/>
<feature type="chain" id="PRO_0000229439" description="GMP synthase [glutamine-hydrolyzing]">
    <location>
        <begin position="1"/>
        <end position="525"/>
    </location>
</feature>
<feature type="domain" description="Glutamine amidotransferase type-1" evidence="1">
    <location>
        <begin position="8"/>
        <end position="206"/>
    </location>
</feature>
<feature type="domain" description="GMPS ATP-PPase" evidence="1">
    <location>
        <begin position="207"/>
        <end position="400"/>
    </location>
</feature>
<feature type="active site" description="Nucleophile" evidence="1">
    <location>
        <position position="85"/>
    </location>
</feature>
<feature type="active site" evidence="1">
    <location>
        <position position="180"/>
    </location>
</feature>
<feature type="active site" evidence="1">
    <location>
        <position position="182"/>
    </location>
</feature>
<feature type="binding site" evidence="1">
    <location>
        <begin position="234"/>
        <end position="240"/>
    </location>
    <ligand>
        <name>ATP</name>
        <dbReference type="ChEBI" id="CHEBI:30616"/>
    </ligand>
</feature>
<dbReference type="EC" id="6.3.5.2" evidence="1"/>
<dbReference type="EMBL" id="AE017354">
    <property type="protein sequence ID" value="AAU27802.1"/>
    <property type="molecule type" value="Genomic_DNA"/>
</dbReference>
<dbReference type="RefSeq" id="WP_010947449.1">
    <property type="nucleotide sequence ID" value="NC_002942.5"/>
</dbReference>
<dbReference type="RefSeq" id="YP_095749.1">
    <property type="nucleotide sequence ID" value="NC_002942.5"/>
</dbReference>
<dbReference type="SMR" id="Q5ZUS0"/>
<dbReference type="STRING" id="272624.lpg1722"/>
<dbReference type="MEROPS" id="C26.957"/>
<dbReference type="PaxDb" id="272624-lpg1722"/>
<dbReference type="GeneID" id="57035711"/>
<dbReference type="KEGG" id="lpn:lpg1722"/>
<dbReference type="PATRIC" id="fig|272624.6.peg.1805"/>
<dbReference type="eggNOG" id="COG0518">
    <property type="taxonomic scope" value="Bacteria"/>
</dbReference>
<dbReference type="eggNOG" id="COG0519">
    <property type="taxonomic scope" value="Bacteria"/>
</dbReference>
<dbReference type="HOGENOM" id="CLU_014340_0_5_6"/>
<dbReference type="OrthoDB" id="9802219at2"/>
<dbReference type="UniPathway" id="UPA00189">
    <property type="reaction ID" value="UER00296"/>
</dbReference>
<dbReference type="Proteomes" id="UP000000609">
    <property type="component" value="Chromosome"/>
</dbReference>
<dbReference type="GO" id="GO:0005829">
    <property type="term" value="C:cytosol"/>
    <property type="evidence" value="ECO:0007669"/>
    <property type="project" value="TreeGrafter"/>
</dbReference>
<dbReference type="GO" id="GO:0005524">
    <property type="term" value="F:ATP binding"/>
    <property type="evidence" value="ECO:0007669"/>
    <property type="project" value="UniProtKB-UniRule"/>
</dbReference>
<dbReference type="GO" id="GO:0003921">
    <property type="term" value="F:GMP synthase activity"/>
    <property type="evidence" value="ECO:0007669"/>
    <property type="project" value="InterPro"/>
</dbReference>
<dbReference type="CDD" id="cd01742">
    <property type="entry name" value="GATase1_GMP_Synthase"/>
    <property type="match status" value="1"/>
</dbReference>
<dbReference type="CDD" id="cd01997">
    <property type="entry name" value="GMP_synthase_C"/>
    <property type="match status" value="1"/>
</dbReference>
<dbReference type="FunFam" id="3.30.300.10:FF:000002">
    <property type="entry name" value="GMP synthase [glutamine-hydrolyzing]"/>
    <property type="match status" value="1"/>
</dbReference>
<dbReference type="FunFam" id="3.40.50.620:FF:000001">
    <property type="entry name" value="GMP synthase [glutamine-hydrolyzing]"/>
    <property type="match status" value="1"/>
</dbReference>
<dbReference type="FunFam" id="3.40.50.880:FF:000001">
    <property type="entry name" value="GMP synthase [glutamine-hydrolyzing]"/>
    <property type="match status" value="1"/>
</dbReference>
<dbReference type="Gene3D" id="3.30.300.10">
    <property type="match status" value="1"/>
</dbReference>
<dbReference type="Gene3D" id="3.40.50.880">
    <property type="match status" value="1"/>
</dbReference>
<dbReference type="Gene3D" id="3.40.50.620">
    <property type="entry name" value="HUPs"/>
    <property type="match status" value="1"/>
</dbReference>
<dbReference type="HAMAP" id="MF_00344">
    <property type="entry name" value="GMP_synthase"/>
    <property type="match status" value="1"/>
</dbReference>
<dbReference type="InterPro" id="IPR029062">
    <property type="entry name" value="Class_I_gatase-like"/>
</dbReference>
<dbReference type="InterPro" id="IPR017926">
    <property type="entry name" value="GATASE"/>
</dbReference>
<dbReference type="InterPro" id="IPR001674">
    <property type="entry name" value="GMP_synth_C"/>
</dbReference>
<dbReference type="InterPro" id="IPR004739">
    <property type="entry name" value="GMP_synth_GATase"/>
</dbReference>
<dbReference type="InterPro" id="IPR022955">
    <property type="entry name" value="GMP_synthase"/>
</dbReference>
<dbReference type="InterPro" id="IPR025777">
    <property type="entry name" value="GMPS_ATP_PPase_dom"/>
</dbReference>
<dbReference type="InterPro" id="IPR022310">
    <property type="entry name" value="NAD/GMP_synthase"/>
</dbReference>
<dbReference type="InterPro" id="IPR014729">
    <property type="entry name" value="Rossmann-like_a/b/a_fold"/>
</dbReference>
<dbReference type="NCBIfam" id="TIGR00884">
    <property type="entry name" value="guaA_Cterm"/>
    <property type="match status" value="1"/>
</dbReference>
<dbReference type="NCBIfam" id="TIGR00888">
    <property type="entry name" value="guaA_Nterm"/>
    <property type="match status" value="1"/>
</dbReference>
<dbReference type="NCBIfam" id="NF000848">
    <property type="entry name" value="PRK00074.1"/>
    <property type="match status" value="1"/>
</dbReference>
<dbReference type="PANTHER" id="PTHR11922:SF2">
    <property type="entry name" value="GMP SYNTHASE [GLUTAMINE-HYDROLYZING]"/>
    <property type="match status" value="1"/>
</dbReference>
<dbReference type="PANTHER" id="PTHR11922">
    <property type="entry name" value="GMP SYNTHASE-RELATED"/>
    <property type="match status" value="1"/>
</dbReference>
<dbReference type="Pfam" id="PF00117">
    <property type="entry name" value="GATase"/>
    <property type="match status" value="1"/>
</dbReference>
<dbReference type="Pfam" id="PF00958">
    <property type="entry name" value="GMP_synt_C"/>
    <property type="match status" value="1"/>
</dbReference>
<dbReference type="Pfam" id="PF02540">
    <property type="entry name" value="NAD_synthase"/>
    <property type="match status" value="1"/>
</dbReference>
<dbReference type="PRINTS" id="PR00097">
    <property type="entry name" value="ANTSNTHASEII"/>
</dbReference>
<dbReference type="PRINTS" id="PR00099">
    <property type="entry name" value="CPSGATASE"/>
</dbReference>
<dbReference type="PRINTS" id="PR00096">
    <property type="entry name" value="GATASE"/>
</dbReference>
<dbReference type="SUPFAM" id="SSF52402">
    <property type="entry name" value="Adenine nucleotide alpha hydrolases-like"/>
    <property type="match status" value="1"/>
</dbReference>
<dbReference type="SUPFAM" id="SSF52317">
    <property type="entry name" value="Class I glutamine amidotransferase-like"/>
    <property type="match status" value="1"/>
</dbReference>
<dbReference type="SUPFAM" id="SSF54810">
    <property type="entry name" value="GMP synthetase C-terminal dimerisation domain"/>
    <property type="match status" value="1"/>
</dbReference>
<dbReference type="PROSITE" id="PS51273">
    <property type="entry name" value="GATASE_TYPE_1"/>
    <property type="match status" value="1"/>
</dbReference>
<dbReference type="PROSITE" id="PS51553">
    <property type="entry name" value="GMPS_ATP_PPASE"/>
    <property type="match status" value="1"/>
</dbReference>
<name>GUAA_LEGPH</name>
<protein>
    <recommendedName>
        <fullName evidence="1">GMP synthase [glutamine-hydrolyzing]</fullName>
        <ecNumber evidence="1">6.3.5.2</ecNumber>
    </recommendedName>
    <alternativeName>
        <fullName evidence="1">GMP synthetase</fullName>
    </alternativeName>
    <alternativeName>
        <fullName evidence="1">Glutamine amidotransferase</fullName>
    </alternativeName>
</protein>
<gene>
    <name evidence="1" type="primary">guaA</name>
    <name type="ordered locus">lpg1722</name>
</gene>
<keyword id="KW-0067">ATP-binding</keyword>
<keyword id="KW-0315">Glutamine amidotransferase</keyword>
<keyword id="KW-0332">GMP biosynthesis</keyword>
<keyword id="KW-0436">Ligase</keyword>
<keyword id="KW-0547">Nucleotide-binding</keyword>
<keyword id="KW-0658">Purine biosynthesis</keyword>
<keyword id="KW-1185">Reference proteome</keyword>
<reference key="1">
    <citation type="journal article" date="2004" name="Science">
        <title>The genomic sequence of the accidental pathogen Legionella pneumophila.</title>
        <authorList>
            <person name="Chien M."/>
            <person name="Morozova I."/>
            <person name="Shi S."/>
            <person name="Sheng H."/>
            <person name="Chen J."/>
            <person name="Gomez S.M."/>
            <person name="Asamani G."/>
            <person name="Hill K."/>
            <person name="Nuara J."/>
            <person name="Feder M."/>
            <person name="Rineer J."/>
            <person name="Greenberg J.J."/>
            <person name="Steshenko V."/>
            <person name="Park S.H."/>
            <person name="Zhao B."/>
            <person name="Teplitskaya E."/>
            <person name="Edwards J.R."/>
            <person name="Pampou S."/>
            <person name="Georghiou A."/>
            <person name="Chou I.-C."/>
            <person name="Iannuccilli W."/>
            <person name="Ulz M.E."/>
            <person name="Kim D.H."/>
            <person name="Geringer-Sameth A."/>
            <person name="Goldsberry C."/>
            <person name="Morozov P."/>
            <person name="Fischer S.G."/>
            <person name="Segal G."/>
            <person name="Qu X."/>
            <person name="Rzhetsky A."/>
            <person name="Zhang P."/>
            <person name="Cayanis E."/>
            <person name="De Jong P.J."/>
            <person name="Ju J."/>
            <person name="Kalachikov S."/>
            <person name="Shuman H.A."/>
            <person name="Russo J.J."/>
        </authorList>
    </citation>
    <scope>NUCLEOTIDE SEQUENCE [LARGE SCALE GENOMIC DNA]</scope>
    <source>
        <strain>Philadelphia 1 / ATCC 33152 / DSM 7513</strain>
    </source>
</reference>
<sequence length="525" mass="58646">MNDLKKSPLLILDFGSQYTQLIARRVREMGVYCEIYPYHINHEQFKKLNPCGVILSGGPSTVTHDANPRAPQWLFDSGLPLLGICYGMQTMAVQLGGQVHSSALREFGYAELRLHGHSQLLNNIEDRILADGSALLDVWMSHGDKVTELPPGFKIICETRNAPIAGMADESRQMYGLQFHPEVTHTLQGLRILQRFVVDICKASTDWTPEHIIDEAINKIREQVGTEKVLLGLSGGVDSSVVAALLHRAIGEQLVCVFVDTGLLRLNEAEQVLSMFGRHMGIRIIAVNAEDKFLTALKGVTCPEEKRKIIGRTFIEVFDEEAQKLTEIKWLAQGTIYPDVIESAATSTNDAAVVIKSHHNVGGLPDTLNLKLLEPIRELFKDEVRQVGLELGLPHDMVYRHPFPGPGLGVRILAEVKKEYADILRKADAIFIEELHNAQLYHKISQAFAVFLPVKSVGVMGDGRRYDYVICLRAVETVDFMTAHWSQLPWDFLGKVSNRIINEVEGVSRVTYDISGKPPATIEWE</sequence>
<accession>Q5ZUS0</accession>
<comment type="function">
    <text evidence="1">Catalyzes the synthesis of GMP from XMP.</text>
</comment>
<comment type="catalytic activity">
    <reaction evidence="1">
        <text>XMP + L-glutamine + ATP + H2O = GMP + L-glutamate + AMP + diphosphate + 2 H(+)</text>
        <dbReference type="Rhea" id="RHEA:11680"/>
        <dbReference type="ChEBI" id="CHEBI:15377"/>
        <dbReference type="ChEBI" id="CHEBI:15378"/>
        <dbReference type="ChEBI" id="CHEBI:29985"/>
        <dbReference type="ChEBI" id="CHEBI:30616"/>
        <dbReference type="ChEBI" id="CHEBI:33019"/>
        <dbReference type="ChEBI" id="CHEBI:57464"/>
        <dbReference type="ChEBI" id="CHEBI:58115"/>
        <dbReference type="ChEBI" id="CHEBI:58359"/>
        <dbReference type="ChEBI" id="CHEBI:456215"/>
        <dbReference type="EC" id="6.3.5.2"/>
    </reaction>
</comment>
<comment type="pathway">
    <text evidence="1">Purine metabolism; GMP biosynthesis; GMP from XMP (L-Gln route): step 1/1.</text>
</comment>
<comment type="subunit">
    <text evidence="1">Homodimer.</text>
</comment>